<name>YUIB_LACLA</name>
<comment type="similarity">
    <text evidence="1">Belongs to the UPF0346 family.</text>
</comment>
<keyword id="KW-1185">Reference proteome</keyword>
<gene>
    <name type="primary">yuiB</name>
    <name type="ordered locus">LL2005</name>
    <name type="ORF">L67463</name>
</gene>
<sequence length="69" mass="8320">MTFYNYLMRHRAPVEKDDATRLANLVFQDPLFPKQSKDFDEISTYLETQAPFYFNLTLFDNIWESYLEA</sequence>
<accession>Q9CE43</accession>
<reference key="1">
    <citation type="journal article" date="2001" name="Genome Res.">
        <title>The complete genome sequence of the lactic acid bacterium Lactococcus lactis ssp. lactis IL1403.</title>
        <authorList>
            <person name="Bolotin A."/>
            <person name="Wincker P."/>
            <person name="Mauger S."/>
            <person name="Jaillon O."/>
            <person name="Malarme K."/>
            <person name="Weissenbach J."/>
            <person name="Ehrlich S.D."/>
            <person name="Sorokin A."/>
        </authorList>
    </citation>
    <scope>NUCLEOTIDE SEQUENCE [LARGE SCALE GENOMIC DNA]</scope>
    <source>
        <strain>IL1403</strain>
    </source>
</reference>
<feature type="chain" id="PRO_0000164275" description="UPF0346 protein YuiB">
    <location>
        <begin position="1"/>
        <end position="69"/>
    </location>
</feature>
<dbReference type="EMBL" id="AE005176">
    <property type="protein sequence ID" value="AAK06103.1"/>
    <property type="molecule type" value="Genomic_DNA"/>
</dbReference>
<dbReference type="PIR" id="E86875">
    <property type="entry name" value="E86875"/>
</dbReference>
<dbReference type="RefSeq" id="NP_268162.1">
    <property type="nucleotide sequence ID" value="NC_002662.1"/>
</dbReference>
<dbReference type="RefSeq" id="WP_010906259.1">
    <property type="nucleotide sequence ID" value="NC_002662.1"/>
</dbReference>
<dbReference type="SMR" id="Q9CE43"/>
<dbReference type="PaxDb" id="272623-L67463"/>
<dbReference type="EnsemblBacteria" id="AAK06103">
    <property type="protein sequence ID" value="AAK06103"/>
    <property type="gene ID" value="L67463"/>
</dbReference>
<dbReference type="KEGG" id="lla:L67463"/>
<dbReference type="PATRIC" id="fig|272623.7.peg.2160"/>
<dbReference type="eggNOG" id="COG4479">
    <property type="taxonomic scope" value="Bacteria"/>
</dbReference>
<dbReference type="HOGENOM" id="CLU_177534_1_0_9"/>
<dbReference type="OrthoDB" id="2242851at2"/>
<dbReference type="Proteomes" id="UP000002196">
    <property type="component" value="Chromosome"/>
</dbReference>
<dbReference type="Gene3D" id="1.10.150.260">
    <property type="entry name" value="YozE SAM-like"/>
    <property type="match status" value="1"/>
</dbReference>
<dbReference type="HAMAP" id="MF_01538">
    <property type="entry name" value="UPF0346"/>
    <property type="match status" value="1"/>
</dbReference>
<dbReference type="InterPro" id="IPR010673">
    <property type="entry name" value="UPF0346"/>
</dbReference>
<dbReference type="InterPro" id="IPR023089">
    <property type="entry name" value="YozE_SAM-like"/>
</dbReference>
<dbReference type="InterPro" id="IPR036806">
    <property type="entry name" value="YozE_SAM-like_sf"/>
</dbReference>
<dbReference type="NCBIfam" id="NF010193">
    <property type="entry name" value="PRK13672.1"/>
    <property type="match status" value="1"/>
</dbReference>
<dbReference type="Pfam" id="PF06855">
    <property type="entry name" value="YozE_SAM_like"/>
    <property type="match status" value="1"/>
</dbReference>
<dbReference type="PIRSF" id="PIRSF037262">
    <property type="entry name" value="UCP037262"/>
    <property type="match status" value="1"/>
</dbReference>
<dbReference type="SUPFAM" id="SSF140652">
    <property type="entry name" value="YozE-like"/>
    <property type="match status" value="1"/>
</dbReference>
<organism>
    <name type="scientific">Lactococcus lactis subsp. lactis (strain IL1403)</name>
    <name type="common">Streptococcus lactis</name>
    <dbReference type="NCBI Taxonomy" id="272623"/>
    <lineage>
        <taxon>Bacteria</taxon>
        <taxon>Bacillati</taxon>
        <taxon>Bacillota</taxon>
        <taxon>Bacilli</taxon>
        <taxon>Lactobacillales</taxon>
        <taxon>Streptococcaceae</taxon>
        <taxon>Lactococcus</taxon>
    </lineage>
</organism>
<evidence type="ECO:0000305" key="1"/>
<protein>
    <recommendedName>
        <fullName>UPF0346 protein YuiB</fullName>
    </recommendedName>
</protein>
<proteinExistence type="inferred from homology"/>